<keyword id="KW-0058">Aromatic hydrocarbons catabolism</keyword>
<keyword id="KW-0223">Dioxygenase</keyword>
<keyword id="KW-0408">Iron</keyword>
<keyword id="KW-0560">Oxidoreductase</keyword>
<dbReference type="EC" id="1.13.11.16" evidence="1"/>
<dbReference type="EMBL" id="CU928160">
    <property type="protein sequence ID" value="CAQ97223.1"/>
    <property type="molecule type" value="Genomic_DNA"/>
</dbReference>
<dbReference type="RefSeq" id="WP_000543459.1">
    <property type="nucleotide sequence ID" value="NC_011741.1"/>
</dbReference>
<dbReference type="SMR" id="B7M2Z6"/>
<dbReference type="KEGG" id="ecr:ECIAI1_0349"/>
<dbReference type="HOGENOM" id="CLU_078149_0_0_6"/>
<dbReference type="UniPathway" id="UPA00714"/>
<dbReference type="GO" id="GO:0047070">
    <property type="term" value="F:3-carboxyethylcatechol 2,3-dioxygenase activity"/>
    <property type="evidence" value="ECO:0007669"/>
    <property type="project" value="UniProtKB-UniRule"/>
</dbReference>
<dbReference type="GO" id="GO:0008198">
    <property type="term" value="F:ferrous iron binding"/>
    <property type="evidence" value="ECO:0007669"/>
    <property type="project" value="InterPro"/>
</dbReference>
<dbReference type="GO" id="GO:0019380">
    <property type="term" value="P:3-phenylpropionate catabolic process"/>
    <property type="evidence" value="ECO:0007669"/>
    <property type="project" value="UniProtKB-UniRule"/>
</dbReference>
<dbReference type="CDD" id="cd07365">
    <property type="entry name" value="MhpB_like"/>
    <property type="match status" value="1"/>
</dbReference>
<dbReference type="Gene3D" id="3.40.830.10">
    <property type="entry name" value="LigB-like"/>
    <property type="match status" value="1"/>
</dbReference>
<dbReference type="HAMAP" id="MF_01653">
    <property type="entry name" value="MhpB"/>
    <property type="match status" value="1"/>
</dbReference>
<dbReference type="InterPro" id="IPR023789">
    <property type="entry name" value="DHPP/DHXA_dioxygenase"/>
</dbReference>
<dbReference type="InterPro" id="IPR004183">
    <property type="entry name" value="Xdiol_dOase_suB"/>
</dbReference>
<dbReference type="NCBIfam" id="NF009907">
    <property type="entry name" value="PRK13370.1-1"/>
    <property type="match status" value="1"/>
</dbReference>
<dbReference type="NCBIfam" id="NF009910">
    <property type="entry name" value="PRK13370.1-4"/>
    <property type="match status" value="1"/>
</dbReference>
<dbReference type="Pfam" id="PF02900">
    <property type="entry name" value="LigB"/>
    <property type="match status" value="1"/>
</dbReference>
<dbReference type="SUPFAM" id="SSF53213">
    <property type="entry name" value="LigB-like"/>
    <property type="match status" value="1"/>
</dbReference>
<sequence>MHAYLHCLSHSPLVGYVDPAQEVLDEVNGVIASARERIAAFSPELVVLFAPDHYNGFFYDVMPPFCLGVGATAIGDFGSAAGELPVPVELAEACAHAVMKSGIDLAVSYCMQVDHGFAQPLEFLLGGLDKVPVLPVFINGVATPLPGFQRTRMLGEAIGRFTSTLNKRVLFLGSGGLSHQPPVPELAKADAHMRDRLLGSGKDLPASERELRQQRVISAAEKFVEDQRTLHPLNPIWDNQFMTLLEQGRIQELDAVSNEELSAIAGKSTHEIKTWVAAFAAISTFGNWRSEGRYYRPIPEWIAGFGSLSARTEN</sequence>
<feature type="chain" id="PRO_1000187004" description="2,3-dihydroxyphenylpropionate/2,3-dihydroxicinnamic acid 1,2-dioxygenase">
    <location>
        <begin position="1"/>
        <end position="314"/>
    </location>
</feature>
<feature type="active site" description="Proton donor" evidence="1">
    <location>
        <position position="115"/>
    </location>
</feature>
<feature type="active site" description="Proton acceptor" evidence="1">
    <location>
        <position position="179"/>
    </location>
</feature>
<proteinExistence type="inferred from homology"/>
<name>MHPB_ECO8A</name>
<reference key="1">
    <citation type="journal article" date="2009" name="PLoS Genet.">
        <title>Organised genome dynamics in the Escherichia coli species results in highly diverse adaptive paths.</title>
        <authorList>
            <person name="Touchon M."/>
            <person name="Hoede C."/>
            <person name="Tenaillon O."/>
            <person name="Barbe V."/>
            <person name="Baeriswyl S."/>
            <person name="Bidet P."/>
            <person name="Bingen E."/>
            <person name="Bonacorsi S."/>
            <person name="Bouchier C."/>
            <person name="Bouvet O."/>
            <person name="Calteau A."/>
            <person name="Chiapello H."/>
            <person name="Clermont O."/>
            <person name="Cruveiller S."/>
            <person name="Danchin A."/>
            <person name="Diard M."/>
            <person name="Dossat C."/>
            <person name="Karoui M.E."/>
            <person name="Frapy E."/>
            <person name="Garry L."/>
            <person name="Ghigo J.M."/>
            <person name="Gilles A.M."/>
            <person name="Johnson J."/>
            <person name="Le Bouguenec C."/>
            <person name="Lescat M."/>
            <person name="Mangenot S."/>
            <person name="Martinez-Jehanne V."/>
            <person name="Matic I."/>
            <person name="Nassif X."/>
            <person name="Oztas S."/>
            <person name="Petit M.A."/>
            <person name="Pichon C."/>
            <person name="Rouy Z."/>
            <person name="Ruf C.S."/>
            <person name="Schneider D."/>
            <person name="Tourret J."/>
            <person name="Vacherie B."/>
            <person name="Vallenet D."/>
            <person name="Medigue C."/>
            <person name="Rocha E.P.C."/>
            <person name="Denamur E."/>
        </authorList>
    </citation>
    <scope>NUCLEOTIDE SEQUENCE [LARGE SCALE GENOMIC DNA]</scope>
    <source>
        <strain>IAI1</strain>
    </source>
</reference>
<comment type="function">
    <text evidence="1">Catalyzes the non-heme iron(II)-dependent oxidative cleavage of 2,3-dihydroxyphenylpropionic acid and 2,3-dihydroxicinnamic acid into 2-hydroxy-6-ketononadienedioate and 2-hydroxy-6-ketononatrienedioate, respectively.</text>
</comment>
<comment type="catalytic activity">
    <reaction evidence="1">
        <text>3-(2,3-dihydroxyphenyl)propanoate + O2 = (2Z,4E)-2-hydroxy-6-oxonona-2,4-dienedioate + H(+)</text>
        <dbReference type="Rhea" id="RHEA:23840"/>
        <dbReference type="ChEBI" id="CHEBI:15378"/>
        <dbReference type="ChEBI" id="CHEBI:15379"/>
        <dbReference type="ChEBI" id="CHEBI:46951"/>
        <dbReference type="ChEBI" id="CHEBI:66887"/>
        <dbReference type="EC" id="1.13.11.16"/>
    </reaction>
</comment>
<comment type="catalytic activity">
    <reaction evidence="1">
        <text>(2E)-3-(2,3-dihydroxyphenyl)prop-2-enoate + O2 = (2Z,4E,7E)-2-hydroxy-6-oxonona-2,4,7-trienedioate + H(+)</text>
        <dbReference type="Rhea" id="RHEA:25054"/>
        <dbReference type="ChEBI" id="CHEBI:15378"/>
        <dbReference type="ChEBI" id="CHEBI:15379"/>
        <dbReference type="ChEBI" id="CHEBI:58642"/>
        <dbReference type="ChEBI" id="CHEBI:66888"/>
        <dbReference type="EC" id="1.13.11.16"/>
    </reaction>
</comment>
<comment type="cofactor">
    <cofactor evidence="1">
        <name>Fe(2+)</name>
        <dbReference type="ChEBI" id="CHEBI:29033"/>
    </cofactor>
</comment>
<comment type="pathway">
    <text evidence="1">Aromatic compound metabolism; 3-phenylpropanoate degradation.</text>
</comment>
<comment type="subunit">
    <text evidence="1">Homotetramer.</text>
</comment>
<comment type="similarity">
    <text evidence="1">Belongs to the LigB/MhpB extradiol dioxygenase family.</text>
</comment>
<evidence type="ECO:0000255" key="1">
    <source>
        <dbReference type="HAMAP-Rule" id="MF_01653"/>
    </source>
</evidence>
<accession>B7M2Z6</accession>
<gene>
    <name evidence="1" type="primary">mhpB</name>
    <name type="ordered locus">ECIAI1_0349</name>
</gene>
<organism>
    <name type="scientific">Escherichia coli O8 (strain IAI1)</name>
    <dbReference type="NCBI Taxonomy" id="585034"/>
    <lineage>
        <taxon>Bacteria</taxon>
        <taxon>Pseudomonadati</taxon>
        <taxon>Pseudomonadota</taxon>
        <taxon>Gammaproteobacteria</taxon>
        <taxon>Enterobacterales</taxon>
        <taxon>Enterobacteriaceae</taxon>
        <taxon>Escherichia</taxon>
    </lineage>
</organism>
<protein>
    <recommendedName>
        <fullName evidence="1">2,3-dihydroxyphenylpropionate/2,3-dihydroxicinnamic acid 1,2-dioxygenase</fullName>
        <ecNumber evidence="1">1.13.11.16</ecNumber>
    </recommendedName>
    <alternativeName>
        <fullName evidence="1">3-carboxyethylcatechol 2,3-dioxygenase</fullName>
    </alternativeName>
</protein>